<organism>
    <name type="scientific">Streptococcus pyogenes serotype M2 (strain MGAS10270)</name>
    <dbReference type="NCBI Taxonomy" id="370552"/>
    <lineage>
        <taxon>Bacteria</taxon>
        <taxon>Bacillati</taxon>
        <taxon>Bacillota</taxon>
        <taxon>Bacilli</taxon>
        <taxon>Lactobacillales</taxon>
        <taxon>Streptococcaceae</taxon>
        <taxon>Streptococcus</taxon>
    </lineage>
</organism>
<accession>Q1JHS5</accession>
<reference key="1">
    <citation type="journal article" date="2006" name="Proc. Natl. Acad. Sci. U.S.A.">
        <title>Molecular genetic anatomy of inter- and intraserotype variation in the human bacterial pathogen group A Streptococcus.</title>
        <authorList>
            <person name="Beres S.B."/>
            <person name="Richter E.W."/>
            <person name="Nagiec M.J."/>
            <person name="Sumby P."/>
            <person name="Porcella S.F."/>
            <person name="DeLeo F.R."/>
            <person name="Musser J.M."/>
        </authorList>
    </citation>
    <scope>NUCLEOTIDE SEQUENCE [LARGE SCALE GENOMIC DNA]</scope>
    <source>
        <strain>MGAS10270</strain>
    </source>
</reference>
<name>Y533_STRPD</name>
<gene>
    <name type="ordered locus">MGAS10270_Spy0533</name>
</gene>
<sequence length="296" mass="33587">MSDKHINLVIVTGMSGAGKTVAIQSFEDLGYFTIDNMPPALVPKFLELIEQTNENRRVALVVDMRSRLFFKEINSTLDSIESNPSIDFRILFLDATDGELVSRYKETRRSHPLAADGRVLDGIRLERELLSPLKSMSQHVVDTTKLTPRQLRKTISDQFSEGSNQASFRIEVMSFGFKYGLPLDADLVFDVRFLPNPYYQVELREKTGLDEDVFNYVMSHPESEVFYKHLLNLIVPILPAYQKEGKSVLTVAIGCTGGQHRSVAFAHCLAESLATDWSVNESHRDQNRRKETVNRS</sequence>
<keyword id="KW-0067">ATP-binding</keyword>
<keyword id="KW-0342">GTP-binding</keyword>
<keyword id="KW-0547">Nucleotide-binding</keyword>
<proteinExistence type="inferred from homology"/>
<comment type="function">
    <text evidence="1">Displays ATPase and GTPase activities.</text>
</comment>
<comment type="similarity">
    <text evidence="1">Belongs to the RapZ-like family.</text>
</comment>
<evidence type="ECO:0000255" key="1">
    <source>
        <dbReference type="HAMAP-Rule" id="MF_00636"/>
    </source>
</evidence>
<feature type="chain" id="PRO_0000259010" description="Nucleotide-binding protein MGAS10270_Spy0533">
    <location>
        <begin position="1"/>
        <end position="296"/>
    </location>
</feature>
<feature type="binding site" evidence="1">
    <location>
        <begin position="13"/>
        <end position="20"/>
    </location>
    <ligand>
        <name>ATP</name>
        <dbReference type="ChEBI" id="CHEBI:30616"/>
    </ligand>
</feature>
<feature type="binding site" evidence="1">
    <location>
        <begin position="63"/>
        <end position="66"/>
    </location>
    <ligand>
        <name>GTP</name>
        <dbReference type="ChEBI" id="CHEBI:37565"/>
    </ligand>
</feature>
<protein>
    <recommendedName>
        <fullName evidence="1">Nucleotide-binding protein MGAS10270_Spy0533</fullName>
    </recommendedName>
</protein>
<dbReference type="EMBL" id="CP000260">
    <property type="protein sequence ID" value="ABF33598.1"/>
    <property type="molecule type" value="Genomic_DNA"/>
</dbReference>
<dbReference type="SMR" id="Q1JHS5"/>
<dbReference type="KEGG" id="sph:MGAS10270_Spy0533"/>
<dbReference type="HOGENOM" id="CLU_059558_0_0_9"/>
<dbReference type="Proteomes" id="UP000002436">
    <property type="component" value="Chromosome"/>
</dbReference>
<dbReference type="GO" id="GO:0005524">
    <property type="term" value="F:ATP binding"/>
    <property type="evidence" value="ECO:0007669"/>
    <property type="project" value="UniProtKB-UniRule"/>
</dbReference>
<dbReference type="GO" id="GO:0005525">
    <property type="term" value="F:GTP binding"/>
    <property type="evidence" value="ECO:0007669"/>
    <property type="project" value="UniProtKB-UniRule"/>
</dbReference>
<dbReference type="Gene3D" id="3.40.50.300">
    <property type="entry name" value="P-loop containing nucleotide triphosphate hydrolases"/>
    <property type="match status" value="1"/>
</dbReference>
<dbReference type="HAMAP" id="MF_00636">
    <property type="entry name" value="RapZ_like"/>
    <property type="match status" value="1"/>
</dbReference>
<dbReference type="InterPro" id="IPR027417">
    <property type="entry name" value="P-loop_NTPase"/>
</dbReference>
<dbReference type="InterPro" id="IPR005337">
    <property type="entry name" value="RapZ-like"/>
</dbReference>
<dbReference type="InterPro" id="IPR053930">
    <property type="entry name" value="RapZ-like_N"/>
</dbReference>
<dbReference type="InterPro" id="IPR053931">
    <property type="entry name" value="RapZ_C"/>
</dbReference>
<dbReference type="NCBIfam" id="NF003828">
    <property type="entry name" value="PRK05416.1"/>
    <property type="match status" value="1"/>
</dbReference>
<dbReference type="PANTHER" id="PTHR30448">
    <property type="entry name" value="RNASE ADAPTER PROTEIN RAPZ"/>
    <property type="match status" value="1"/>
</dbReference>
<dbReference type="PANTHER" id="PTHR30448:SF0">
    <property type="entry name" value="RNASE ADAPTER PROTEIN RAPZ"/>
    <property type="match status" value="1"/>
</dbReference>
<dbReference type="Pfam" id="PF22740">
    <property type="entry name" value="PapZ_C"/>
    <property type="match status" value="1"/>
</dbReference>
<dbReference type="Pfam" id="PF03668">
    <property type="entry name" value="RapZ-like_N"/>
    <property type="match status" value="1"/>
</dbReference>
<dbReference type="PIRSF" id="PIRSF005052">
    <property type="entry name" value="P-loopkin"/>
    <property type="match status" value="1"/>
</dbReference>
<dbReference type="SUPFAM" id="SSF52540">
    <property type="entry name" value="P-loop containing nucleoside triphosphate hydrolases"/>
    <property type="match status" value="1"/>
</dbReference>